<dbReference type="EC" id="2.1.1.192" evidence="1"/>
<dbReference type="EMBL" id="CP000046">
    <property type="protein sequence ID" value="AAW38067.1"/>
    <property type="molecule type" value="Genomic_DNA"/>
</dbReference>
<dbReference type="RefSeq" id="WP_000626897.1">
    <property type="nucleotide sequence ID" value="NZ_JBGOFO010000002.1"/>
</dbReference>
<dbReference type="SMR" id="Q5HGL4"/>
<dbReference type="KEGG" id="sac:SACOL1230"/>
<dbReference type="HOGENOM" id="CLU_029101_0_1_9"/>
<dbReference type="Proteomes" id="UP000000530">
    <property type="component" value="Chromosome"/>
</dbReference>
<dbReference type="GO" id="GO:0005737">
    <property type="term" value="C:cytoplasm"/>
    <property type="evidence" value="ECO:0007669"/>
    <property type="project" value="UniProtKB-SubCell"/>
</dbReference>
<dbReference type="GO" id="GO:0051539">
    <property type="term" value="F:4 iron, 4 sulfur cluster binding"/>
    <property type="evidence" value="ECO:0007669"/>
    <property type="project" value="UniProtKB-UniRule"/>
</dbReference>
<dbReference type="GO" id="GO:0046872">
    <property type="term" value="F:metal ion binding"/>
    <property type="evidence" value="ECO:0007669"/>
    <property type="project" value="UniProtKB-KW"/>
</dbReference>
<dbReference type="GO" id="GO:0070040">
    <property type="term" value="F:rRNA (adenine(2503)-C2-)-methyltransferase activity"/>
    <property type="evidence" value="ECO:0007669"/>
    <property type="project" value="UniProtKB-UniRule"/>
</dbReference>
<dbReference type="GO" id="GO:0019843">
    <property type="term" value="F:rRNA binding"/>
    <property type="evidence" value="ECO:0007669"/>
    <property type="project" value="UniProtKB-UniRule"/>
</dbReference>
<dbReference type="GO" id="GO:0002935">
    <property type="term" value="F:tRNA (adenine(37)-C2)-methyltransferase activity"/>
    <property type="evidence" value="ECO:0007669"/>
    <property type="project" value="UniProtKB-UniRule"/>
</dbReference>
<dbReference type="GO" id="GO:0000049">
    <property type="term" value="F:tRNA binding"/>
    <property type="evidence" value="ECO:0007669"/>
    <property type="project" value="UniProtKB-UniRule"/>
</dbReference>
<dbReference type="GO" id="GO:0046677">
    <property type="term" value="P:response to antibiotic"/>
    <property type="evidence" value="ECO:0007669"/>
    <property type="project" value="UniProtKB-KW"/>
</dbReference>
<dbReference type="GO" id="GO:0070475">
    <property type="term" value="P:rRNA base methylation"/>
    <property type="evidence" value="ECO:0007669"/>
    <property type="project" value="UniProtKB-UniRule"/>
</dbReference>
<dbReference type="GO" id="GO:0030488">
    <property type="term" value="P:tRNA methylation"/>
    <property type="evidence" value="ECO:0007669"/>
    <property type="project" value="UniProtKB-UniRule"/>
</dbReference>
<dbReference type="CDD" id="cd01335">
    <property type="entry name" value="Radical_SAM"/>
    <property type="match status" value="1"/>
</dbReference>
<dbReference type="FunFam" id="1.10.150.530:FF:000002">
    <property type="entry name" value="Probable dual-specificity RNA methyltransferase RlmN"/>
    <property type="match status" value="1"/>
</dbReference>
<dbReference type="FunFam" id="3.20.20.70:FF:000014">
    <property type="entry name" value="Probable dual-specificity RNA methyltransferase RlmN"/>
    <property type="match status" value="1"/>
</dbReference>
<dbReference type="Gene3D" id="1.10.150.530">
    <property type="match status" value="1"/>
</dbReference>
<dbReference type="Gene3D" id="3.20.20.70">
    <property type="entry name" value="Aldolase class I"/>
    <property type="match status" value="1"/>
</dbReference>
<dbReference type="HAMAP" id="MF_01849">
    <property type="entry name" value="RNA_methyltr_RlmN"/>
    <property type="match status" value="1"/>
</dbReference>
<dbReference type="InterPro" id="IPR013785">
    <property type="entry name" value="Aldolase_TIM"/>
</dbReference>
<dbReference type="InterPro" id="IPR040072">
    <property type="entry name" value="Methyltransferase_A"/>
</dbReference>
<dbReference type="InterPro" id="IPR048641">
    <property type="entry name" value="RlmN_N"/>
</dbReference>
<dbReference type="InterPro" id="IPR027492">
    <property type="entry name" value="RNA_MTrfase_RlmN"/>
</dbReference>
<dbReference type="InterPro" id="IPR004383">
    <property type="entry name" value="rRNA_lsu_MTrfase_RlmN/Cfr"/>
</dbReference>
<dbReference type="InterPro" id="IPR007197">
    <property type="entry name" value="rSAM"/>
</dbReference>
<dbReference type="NCBIfam" id="TIGR00048">
    <property type="entry name" value="rRNA_mod_RlmN"/>
    <property type="match status" value="1"/>
</dbReference>
<dbReference type="PANTHER" id="PTHR30544">
    <property type="entry name" value="23S RRNA METHYLTRANSFERASE"/>
    <property type="match status" value="1"/>
</dbReference>
<dbReference type="PANTHER" id="PTHR30544:SF5">
    <property type="entry name" value="RADICAL SAM CORE DOMAIN-CONTAINING PROTEIN"/>
    <property type="match status" value="1"/>
</dbReference>
<dbReference type="Pfam" id="PF04055">
    <property type="entry name" value="Radical_SAM"/>
    <property type="match status" value="1"/>
</dbReference>
<dbReference type="Pfam" id="PF21016">
    <property type="entry name" value="RlmN_N"/>
    <property type="match status" value="1"/>
</dbReference>
<dbReference type="PIRSF" id="PIRSF006004">
    <property type="entry name" value="CHP00048"/>
    <property type="match status" value="1"/>
</dbReference>
<dbReference type="SFLD" id="SFLDF00275">
    <property type="entry name" value="adenosine_C2_methyltransferase"/>
    <property type="match status" value="1"/>
</dbReference>
<dbReference type="SFLD" id="SFLDG01062">
    <property type="entry name" value="methyltransferase_(Class_A)"/>
    <property type="match status" value="1"/>
</dbReference>
<dbReference type="SUPFAM" id="SSF102114">
    <property type="entry name" value="Radical SAM enzymes"/>
    <property type="match status" value="1"/>
</dbReference>
<dbReference type="PROSITE" id="PS51918">
    <property type="entry name" value="RADICAL_SAM"/>
    <property type="match status" value="1"/>
</dbReference>
<name>RLMN_STAAC</name>
<gene>
    <name evidence="1" type="primary">rlmN</name>
    <name type="ordered locus">SACOL1230</name>
</gene>
<comment type="function">
    <text evidence="1">Specifically methylates position 2 of adenine 2503 in 23S rRNA and position 2 of adenine 37 in tRNAs. Confers resistance to some classes of antibiotics.</text>
</comment>
<comment type="catalytic activity">
    <reaction evidence="1">
        <text>adenosine(2503) in 23S rRNA + 2 reduced [2Fe-2S]-[ferredoxin] + 2 S-adenosyl-L-methionine = 2-methyladenosine(2503) in 23S rRNA + 5'-deoxyadenosine + L-methionine + 2 oxidized [2Fe-2S]-[ferredoxin] + S-adenosyl-L-homocysteine</text>
        <dbReference type="Rhea" id="RHEA:42916"/>
        <dbReference type="Rhea" id="RHEA-COMP:10000"/>
        <dbReference type="Rhea" id="RHEA-COMP:10001"/>
        <dbReference type="Rhea" id="RHEA-COMP:10152"/>
        <dbReference type="Rhea" id="RHEA-COMP:10282"/>
        <dbReference type="ChEBI" id="CHEBI:17319"/>
        <dbReference type="ChEBI" id="CHEBI:33737"/>
        <dbReference type="ChEBI" id="CHEBI:33738"/>
        <dbReference type="ChEBI" id="CHEBI:57844"/>
        <dbReference type="ChEBI" id="CHEBI:57856"/>
        <dbReference type="ChEBI" id="CHEBI:59789"/>
        <dbReference type="ChEBI" id="CHEBI:74411"/>
        <dbReference type="ChEBI" id="CHEBI:74497"/>
        <dbReference type="EC" id="2.1.1.192"/>
    </reaction>
</comment>
<comment type="catalytic activity">
    <reaction evidence="1">
        <text>adenosine(37) in tRNA + 2 reduced [2Fe-2S]-[ferredoxin] + 2 S-adenosyl-L-methionine = 2-methyladenosine(37) in tRNA + 5'-deoxyadenosine + L-methionine + 2 oxidized [2Fe-2S]-[ferredoxin] + S-adenosyl-L-homocysteine</text>
        <dbReference type="Rhea" id="RHEA:43332"/>
        <dbReference type="Rhea" id="RHEA-COMP:10000"/>
        <dbReference type="Rhea" id="RHEA-COMP:10001"/>
        <dbReference type="Rhea" id="RHEA-COMP:10162"/>
        <dbReference type="Rhea" id="RHEA-COMP:10485"/>
        <dbReference type="ChEBI" id="CHEBI:17319"/>
        <dbReference type="ChEBI" id="CHEBI:33737"/>
        <dbReference type="ChEBI" id="CHEBI:33738"/>
        <dbReference type="ChEBI" id="CHEBI:57844"/>
        <dbReference type="ChEBI" id="CHEBI:57856"/>
        <dbReference type="ChEBI" id="CHEBI:59789"/>
        <dbReference type="ChEBI" id="CHEBI:74411"/>
        <dbReference type="ChEBI" id="CHEBI:74497"/>
        <dbReference type="EC" id="2.1.1.192"/>
    </reaction>
</comment>
<comment type="cofactor">
    <cofactor evidence="1">
        <name>[4Fe-4S] cluster</name>
        <dbReference type="ChEBI" id="CHEBI:49883"/>
    </cofactor>
    <text evidence="1">Binds 1 [4Fe-4S] cluster. The cluster is coordinated with 3 cysteines and an exchangeable S-adenosyl-L-methionine.</text>
</comment>
<comment type="subcellular location">
    <subcellularLocation>
        <location evidence="1">Cytoplasm</location>
    </subcellularLocation>
</comment>
<comment type="miscellaneous">
    <text evidence="1">Reaction proceeds by a ping-pong mechanism involving intermediate methylation of a conserved cysteine residue.</text>
</comment>
<comment type="similarity">
    <text evidence="1">Belongs to the radical SAM superfamily. RlmN family.</text>
</comment>
<organism>
    <name type="scientific">Staphylococcus aureus (strain COL)</name>
    <dbReference type="NCBI Taxonomy" id="93062"/>
    <lineage>
        <taxon>Bacteria</taxon>
        <taxon>Bacillati</taxon>
        <taxon>Bacillota</taxon>
        <taxon>Bacilli</taxon>
        <taxon>Bacillales</taxon>
        <taxon>Staphylococcaceae</taxon>
        <taxon>Staphylococcus</taxon>
    </lineage>
</organism>
<protein>
    <recommendedName>
        <fullName evidence="1">Probable dual-specificity RNA methyltransferase RlmN</fullName>
        <ecNumber evidence="1">2.1.1.192</ecNumber>
    </recommendedName>
    <alternativeName>
        <fullName evidence="1">23S rRNA (adenine(2503)-C(2))-methyltransferase</fullName>
    </alternativeName>
    <alternativeName>
        <fullName evidence="1">23S rRNA m2A2503 methyltransferase</fullName>
    </alternativeName>
    <alternativeName>
        <fullName evidence="1">Ribosomal RNA large subunit methyltransferase N</fullName>
    </alternativeName>
    <alternativeName>
        <fullName evidence="1">tRNA (adenine(37)-C(2))-methyltransferase</fullName>
    </alternativeName>
    <alternativeName>
        <fullName evidence="1">tRNA m2A37 methyltransferase</fullName>
    </alternativeName>
</protein>
<feature type="chain" id="PRO_0000350428" description="Probable dual-specificity RNA methyltransferase RlmN">
    <location>
        <begin position="1"/>
        <end position="364"/>
    </location>
</feature>
<feature type="domain" description="Radical SAM core" evidence="2">
    <location>
        <begin position="113"/>
        <end position="346"/>
    </location>
</feature>
<feature type="active site" description="Proton acceptor" evidence="1">
    <location>
        <position position="107"/>
    </location>
</feature>
<feature type="active site" description="S-methylcysteine intermediate" evidence="1">
    <location>
        <position position="351"/>
    </location>
</feature>
<feature type="binding site" evidence="1">
    <location>
        <position position="127"/>
    </location>
    <ligand>
        <name>[4Fe-4S] cluster</name>
        <dbReference type="ChEBI" id="CHEBI:49883"/>
        <note>4Fe-4S-S-AdoMet</note>
    </ligand>
</feature>
<feature type="binding site" evidence="1">
    <location>
        <position position="131"/>
    </location>
    <ligand>
        <name>[4Fe-4S] cluster</name>
        <dbReference type="ChEBI" id="CHEBI:49883"/>
        <note>4Fe-4S-S-AdoMet</note>
    </ligand>
</feature>
<feature type="binding site" evidence="1">
    <location>
        <position position="134"/>
    </location>
    <ligand>
        <name>[4Fe-4S] cluster</name>
        <dbReference type="ChEBI" id="CHEBI:49883"/>
        <note>4Fe-4S-S-AdoMet</note>
    </ligand>
</feature>
<feature type="binding site" evidence="1">
    <location>
        <begin position="177"/>
        <end position="178"/>
    </location>
    <ligand>
        <name>S-adenosyl-L-methionine</name>
        <dbReference type="ChEBI" id="CHEBI:59789"/>
    </ligand>
</feature>
<feature type="binding site" evidence="1">
    <location>
        <position position="209"/>
    </location>
    <ligand>
        <name>S-adenosyl-L-methionine</name>
        <dbReference type="ChEBI" id="CHEBI:59789"/>
    </ligand>
</feature>
<feature type="binding site" evidence="1">
    <location>
        <begin position="232"/>
        <end position="234"/>
    </location>
    <ligand>
        <name>S-adenosyl-L-methionine</name>
        <dbReference type="ChEBI" id="CHEBI:59789"/>
    </ligand>
</feature>
<feature type="binding site" evidence="1">
    <location>
        <position position="308"/>
    </location>
    <ligand>
        <name>S-adenosyl-L-methionine</name>
        <dbReference type="ChEBI" id="CHEBI:59789"/>
    </ligand>
</feature>
<feature type="disulfide bond" description="(transient)" evidence="1">
    <location>
        <begin position="120"/>
        <end position="351"/>
    </location>
</feature>
<sequence length="364" mass="41905">MITAEKKKKNKFLPNFDKQSIYSLRFDEMQNWLVEQGQQKFRAKQIFEWLYQKRVDSIDEMTNLSKDLRQLLKDNFTVTTLTTVVKQESKDGTIKFLFELQDGYTIETVLMRHDYGNSVCVTTQVGCRIGCTFCASTLGGLKRNLEAGEIVSQVLTVQKALDATEERVSQIVIMGIGEPFENYDEMMDFLRIVNDDNSLNIGARHITVSTSGIIPRIYDFADEDIQINFAVSLHAAKDEVRSRLMPINRAYNVEKLIEAIQYYQEKTNRRVTFEYGLFGGVNDQLEHARELAHLIKGLNCHVNLIPVNHVPERNYVKTAKNDIFKFEKELKRLGINATIRREQGSDIDAACGQLRAKERQVETR</sequence>
<proteinExistence type="inferred from homology"/>
<accession>Q5HGL4</accession>
<keyword id="KW-0004">4Fe-4S</keyword>
<keyword id="KW-0046">Antibiotic resistance</keyword>
<keyword id="KW-0963">Cytoplasm</keyword>
<keyword id="KW-1015">Disulfide bond</keyword>
<keyword id="KW-0408">Iron</keyword>
<keyword id="KW-0411">Iron-sulfur</keyword>
<keyword id="KW-0479">Metal-binding</keyword>
<keyword id="KW-0489">Methyltransferase</keyword>
<keyword id="KW-0698">rRNA processing</keyword>
<keyword id="KW-0949">S-adenosyl-L-methionine</keyword>
<keyword id="KW-0808">Transferase</keyword>
<keyword id="KW-0819">tRNA processing</keyword>
<reference key="1">
    <citation type="journal article" date="2005" name="J. Bacteriol.">
        <title>Insights on evolution of virulence and resistance from the complete genome analysis of an early methicillin-resistant Staphylococcus aureus strain and a biofilm-producing methicillin-resistant Staphylococcus epidermidis strain.</title>
        <authorList>
            <person name="Gill S.R."/>
            <person name="Fouts D.E."/>
            <person name="Archer G.L."/>
            <person name="Mongodin E.F."/>
            <person name="DeBoy R.T."/>
            <person name="Ravel J."/>
            <person name="Paulsen I.T."/>
            <person name="Kolonay J.F."/>
            <person name="Brinkac L.M."/>
            <person name="Beanan M.J."/>
            <person name="Dodson R.J."/>
            <person name="Daugherty S.C."/>
            <person name="Madupu R."/>
            <person name="Angiuoli S.V."/>
            <person name="Durkin A.S."/>
            <person name="Haft D.H."/>
            <person name="Vamathevan J.J."/>
            <person name="Khouri H."/>
            <person name="Utterback T.R."/>
            <person name="Lee C."/>
            <person name="Dimitrov G."/>
            <person name="Jiang L."/>
            <person name="Qin H."/>
            <person name="Weidman J."/>
            <person name="Tran K."/>
            <person name="Kang K.H."/>
            <person name="Hance I.R."/>
            <person name="Nelson K.E."/>
            <person name="Fraser C.M."/>
        </authorList>
    </citation>
    <scope>NUCLEOTIDE SEQUENCE [LARGE SCALE GENOMIC DNA]</scope>
    <source>
        <strain>COL</strain>
    </source>
</reference>
<evidence type="ECO:0000255" key="1">
    <source>
        <dbReference type="HAMAP-Rule" id="MF_01849"/>
    </source>
</evidence>
<evidence type="ECO:0000255" key="2">
    <source>
        <dbReference type="PROSITE-ProRule" id="PRU01266"/>
    </source>
</evidence>